<name>SAM10_CAEEL</name>
<feature type="chain" id="PRO_0000432619" description="Single-stranded DNA-binding protein homolog sam-10">
    <location>
        <begin position="1"/>
        <end position="455"/>
    </location>
</feature>
<feature type="domain" description="LisH" evidence="2">
    <location>
        <begin position="19"/>
        <end position="51"/>
    </location>
</feature>
<feature type="region of interest" description="Disordered" evidence="3">
    <location>
        <begin position="217"/>
        <end position="249"/>
    </location>
</feature>
<feature type="region of interest" description="Disordered" evidence="3">
    <location>
        <begin position="281"/>
        <end position="302"/>
    </location>
</feature>
<feature type="region of interest" description="Disordered" evidence="3">
    <location>
        <begin position="314"/>
        <end position="343"/>
    </location>
</feature>
<feature type="region of interest" description="Disordered" evidence="3">
    <location>
        <begin position="357"/>
        <end position="442"/>
    </location>
</feature>
<feature type="compositionally biased region" description="Low complexity" evidence="3">
    <location>
        <begin position="288"/>
        <end position="298"/>
    </location>
</feature>
<feature type="compositionally biased region" description="Low complexity" evidence="3">
    <location>
        <begin position="321"/>
        <end position="336"/>
    </location>
</feature>
<feature type="compositionally biased region" description="Polar residues" evidence="3">
    <location>
        <begin position="396"/>
        <end position="406"/>
    </location>
</feature>
<feature type="compositionally biased region" description="Low complexity" evidence="3">
    <location>
        <begin position="407"/>
        <end position="421"/>
    </location>
</feature>
<feature type="splice variant" id="VSP_057535" description="In isoform b." evidence="6">
    <location>
        <begin position="1"/>
        <end position="204"/>
    </location>
</feature>
<dbReference type="EMBL" id="AL117203">
    <property type="protein sequence ID" value="CAV31815.1"/>
    <property type="molecule type" value="Genomic_DNA"/>
</dbReference>
<dbReference type="EMBL" id="AL117203">
    <property type="protein sequence ID" value="CAV31816.1"/>
    <property type="molecule type" value="Genomic_DNA"/>
</dbReference>
<dbReference type="RefSeq" id="NP_001254379.1">
    <molecule id="B7FAS6-1"/>
    <property type="nucleotide sequence ID" value="NM_001267450.2"/>
</dbReference>
<dbReference type="RefSeq" id="NP_001254380.1">
    <molecule id="B7FAS6-2"/>
    <property type="nucleotide sequence ID" value="NM_001267451.3"/>
</dbReference>
<dbReference type="SMR" id="B7FAS6"/>
<dbReference type="FunCoup" id="B7FAS6">
    <property type="interactions" value="1124"/>
</dbReference>
<dbReference type="STRING" id="6239.Y48C3A.8a.1"/>
<dbReference type="PaxDb" id="6239-Y48C3A.8a.1"/>
<dbReference type="PeptideAtlas" id="B7FAS6"/>
<dbReference type="EnsemblMetazoa" id="Y48C3A.8a.1">
    <molecule id="B7FAS6-1"/>
    <property type="protein sequence ID" value="Y48C3A.8a.1"/>
    <property type="gene ID" value="WBGene00012990"/>
</dbReference>
<dbReference type="EnsemblMetazoa" id="Y48C3A.8b.1">
    <molecule id="B7FAS6-2"/>
    <property type="protein sequence ID" value="Y48C3A.8b.1"/>
    <property type="gene ID" value="WBGene00012990"/>
</dbReference>
<dbReference type="GeneID" id="174975"/>
<dbReference type="KEGG" id="cel:CELE_Y48C3A.8"/>
<dbReference type="AGR" id="WB:WBGene00012990"/>
<dbReference type="CTD" id="174975"/>
<dbReference type="WormBase" id="Y48C3A.8a">
    <molecule id="B7FAS6-1"/>
    <property type="protein sequence ID" value="CE43420"/>
    <property type="gene ID" value="WBGene00012990"/>
    <property type="gene designation" value="sam-10"/>
</dbReference>
<dbReference type="WormBase" id="Y48C3A.8b">
    <molecule id="B7FAS6-2"/>
    <property type="protein sequence ID" value="CE43413"/>
    <property type="gene ID" value="WBGene00012990"/>
    <property type="gene designation" value="sam-10"/>
</dbReference>
<dbReference type="eggNOG" id="KOG4594">
    <property type="taxonomic scope" value="Eukaryota"/>
</dbReference>
<dbReference type="GeneTree" id="ENSGT00950000183049"/>
<dbReference type="HOGENOM" id="CLU_593463_0_0_1"/>
<dbReference type="InParanoid" id="B7FAS6"/>
<dbReference type="OMA" id="MIGMPPG"/>
<dbReference type="OrthoDB" id="5600002at2759"/>
<dbReference type="PRO" id="PR:B7FAS6"/>
<dbReference type="Proteomes" id="UP000001940">
    <property type="component" value="Chromosome II"/>
</dbReference>
<dbReference type="Bgee" id="WBGene00012990">
    <property type="expression patterns" value="Expressed in pharyngeal muscle cell (C elegans) and 4 other cell types or tissues"/>
</dbReference>
<dbReference type="GO" id="GO:0005737">
    <property type="term" value="C:cytoplasm"/>
    <property type="evidence" value="ECO:0007669"/>
    <property type="project" value="UniProtKB-SubCell"/>
</dbReference>
<dbReference type="GO" id="GO:0005634">
    <property type="term" value="C:nucleus"/>
    <property type="evidence" value="ECO:0000314"/>
    <property type="project" value="WormBase"/>
</dbReference>
<dbReference type="GO" id="GO:0048755">
    <property type="term" value="P:branching morphogenesis of a nerve"/>
    <property type="evidence" value="ECO:0000315"/>
    <property type="project" value="UniProtKB"/>
</dbReference>
<dbReference type="GO" id="GO:0010629">
    <property type="term" value="P:negative regulation of gene expression"/>
    <property type="evidence" value="ECO:0000315"/>
    <property type="project" value="UniProtKB"/>
</dbReference>
<dbReference type="GO" id="GO:0045944">
    <property type="term" value="P:positive regulation of transcription by RNA polymerase II"/>
    <property type="evidence" value="ECO:0000318"/>
    <property type="project" value="GO_Central"/>
</dbReference>
<dbReference type="GO" id="GO:1902473">
    <property type="term" value="P:regulation of protein localization to synapse"/>
    <property type="evidence" value="ECO:0000315"/>
    <property type="project" value="UniProtKB"/>
</dbReference>
<dbReference type="GO" id="GO:0007416">
    <property type="term" value="P:synapse assembly"/>
    <property type="evidence" value="ECO:0000315"/>
    <property type="project" value="WormBase"/>
</dbReference>
<dbReference type="InterPro" id="IPR006594">
    <property type="entry name" value="LisH"/>
</dbReference>
<dbReference type="PANTHER" id="PTHR12610:SF12">
    <property type="entry name" value="SEQUENCE-SPECIFIC SINGLE-STRANDED DNA-BINDING PROTEIN, ISOFORM D"/>
    <property type="match status" value="1"/>
</dbReference>
<dbReference type="PANTHER" id="PTHR12610">
    <property type="entry name" value="SINGLE STRANDED DNA BINDING PROTEIN"/>
    <property type="match status" value="1"/>
</dbReference>
<dbReference type="SMART" id="SM00667">
    <property type="entry name" value="LisH"/>
    <property type="match status" value="1"/>
</dbReference>
<dbReference type="PROSITE" id="PS50896">
    <property type="entry name" value="LISH"/>
    <property type="match status" value="1"/>
</dbReference>
<reference evidence="6" key="1">
    <citation type="journal article" date="2011" name="Development">
        <title>Regulation of C. elegans presynaptic differentiation and neurite branching via a novel signaling pathway initiated by SAM-10.</title>
        <authorList>
            <person name="Zheng Q."/>
            <person name="Schaefer A.M."/>
            <person name="Nonet M.L."/>
        </authorList>
    </citation>
    <scope>NUCLEOTIDE SEQUENCE [MRNA] (ISOFORM A)</scope>
    <scope>FUNCTION</scope>
    <scope>SUBCELLULAR LOCATION</scope>
    <scope>TISSUE SPECIFICITY</scope>
    <scope>DEVELOPMENTAL STAGE</scope>
    <scope>DISRUPTION PHENOTYPE</scope>
</reference>
<reference evidence="7" key="2">
    <citation type="journal article" date="1998" name="Science">
        <title>Genome sequence of the nematode C. elegans: a platform for investigating biology.</title>
        <authorList>
            <consortium name="The C. elegans sequencing consortium"/>
        </authorList>
    </citation>
    <scope>NUCLEOTIDE SEQUENCE [LARGE SCALE GENOMIC DNA]</scope>
    <source>
        <strain evidence="7">Bristol N2</strain>
    </source>
</reference>
<sequence>MPPQVIQQQQQSLASEMTARDRLTSYIYEYLQQTGASKTAETFKEEVLSTNPAAGLAAANSTKLSDKSFLLEWWLLFWDLYSAAPERRDAGGDPFSAEAKYFHEAMIGMPPGMNGHFAPPPMGMEMMGGHPGAFGGRFAPGRMPPGAMAPGGMPPGAFPMFPPDPRLQRMAPNQGMRMPPPPVGQPFPGAVGMPRPVGPGAPMDMSGMQRFDFMGGPPPGGGAQPFPGASGSGGMMPNGAHPHMSLNSPSMGVPPADMPPFMGMPPMPPTSSSAMPFGMSSDHQPMSAGPAAAAPGATTAGGPGTPGMIGSVPGPGSVPQVATTSVGSVGTPSSIGQQLHQPKQEITTNGEEIMKTEALTPTGGGGGGSVPPPPPAATAAVSMNGGGPGSAPGSAHSVNNNVNPGTPGSNPLSNPMSNPPLSSGPPPPGSNDAFGKDDNGEISKIREGLLDGFCA</sequence>
<gene>
    <name evidence="8" type="primary">sam-10</name>
    <name evidence="8" type="ORF">Y48C3A.8</name>
</gene>
<protein>
    <recommendedName>
        <fullName evidence="1">Single-stranded DNA-binding protein homolog sam-10</fullName>
    </recommendedName>
    <alternativeName>
        <fullName evidence="5">Synaptic vesicle tag abnormal in mechanosensory neurons</fullName>
    </alternativeName>
</protein>
<organism evidence="7">
    <name type="scientific">Caenorhabditis elegans</name>
    <dbReference type="NCBI Taxonomy" id="6239"/>
    <lineage>
        <taxon>Eukaryota</taxon>
        <taxon>Metazoa</taxon>
        <taxon>Ecdysozoa</taxon>
        <taxon>Nematoda</taxon>
        <taxon>Chromadorea</taxon>
        <taxon>Rhabditida</taxon>
        <taxon>Rhabditina</taxon>
        <taxon>Rhabditomorpha</taxon>
        <taxon>Rhabditoidea</taxon>
        <taxon>Rhabditidae</taxon>
        <taxon>Peloderinae</taxon>
        <taxon>Caenorhabditis</taxon>
    </lineage>
</organism>
<evidence type="ECO:0000250" key="1">
    <source>
        <dbReference type="UniProtKB" id="Q9BWW4"/>
    </source>
</evidence>
<evidence type="ECO:0000255" key="2">
    <source>
        <dbReference type="PROSITE-ProRule" id="PRU00126"/>
    </source>
</evidence>
<evidence type="ECO:0000256" key="3">
    <source>
        <dbReference type="SAM" id="MobiDB-lite"/>
    </source>
</evidence>
<evidence type="ECO:0000269" key="4">
    <source>
    </source>
</evidence>
<evidence type="ECO:0000303" key="5">
    <source>
    </source>
</evidence>
<evidence type="ECO:0000305" key="6"/>
<evidence type="ECO:0000312" key="7">
    <source>
        <dbReference type="Proteomes" id="UP000001940"/>
    </source>
</evidence>
<evidence type="ECO:0000312" key="8">
    <source>
        <dbReference type="WormBase" id="Y48C3A.8a"/>
    </source>
</evidence>
<evidence type="ECO:0000312" key="9">
    <source>
        <dbReference type="WormBase" id="Y48C3A.8b"/>
    </source>
</evidence>
<keyword id="KW-0025">Alternative splicing</keyword>
<keyword id="KW-0963">Cytoplasm</keyword>
<keyword id="KW-0524">Neurogenesis</keyword>
<keyword id="KW-0539">Nucleus</keyword>
<keyword id="KW-1185">Reference proteome</keyword>
<accession>B7FAS6</accession>
<accession>B7FAS7</accession>
<proteinExistence type="evidence at transcript level"/>
<comment type="function">
    <text evidence="4">Involved cell autonomously in PLM neuron pre-synaptic differentiation by negatively regulating prk-2 expression and in neurite branch positioning.</text>
</comment>
<comment type="subcellular location">
    <subcellularLocation>
        <location evidence="4">Cytoplasm</location>
    </subcellularLocation>
    <subcellularLocation>
        <location evidence="4">Nucleus</location>
    </subcellularLocation>
    <text evidence="4">In PLM neurons, translocates into the nucleus during the 3-fold embryonic stage and remains nuclear in the adult. Nuclear localization is idb-1-dependent.</text>
</comment>
<comment type="alternative products">
    <event type="alternative splicing"/>
    <isoform>
        <id>B7FAS6-1</id>
        <name>a</name>
        <sequence type="displayed"/>
    </isoform>
    <isoform>
        <id>B7FAS6-2</id>
        <name evidence="9">b</name>
        <sequence type="described" ref="VSP_057535"/>
    </isoform>
</comment>
<comment type="tissue specificity">
    <text evidence="4">Ubiquitously expressed with higher expression in the head and tail ganglia, the vulva and PLM neurons.</text>
</comment>
<comment type="developmental stage">
    <text evidence="4">Expression begins at the 1.5-fold embryonic stage and is retained in the adult.</text>
</comment>
<comment type="disruption phenotype">
    <text evidence="4">Defects in PLM neuron synaptic differentiation characterized by a misalignment of active zones and synaptic vesicles, branch point anterior to the vulva and overextension of synaptic branch. DD motoneurons display similar pre-synaptic defects. Increased expression of prk-2. In addition, mutants display a moderate uncoordinated movement, a small decrease in body size, a defect in egg laying and a slower growth.</text>
</comment>